<gene>
    <name evidence="3" type="primary">dlp1</name>
    <name evidence="3" type="synonym">cj0411</name>
    <name type="ordered locus">CJJ81176_0435</name>
</gene>
<dbReference type="EMBL" id="CP000538">
    <property type="protein sequence ID" value="EAQ73461.1"/>
    <property type="molecule type" value="Genomic_DNA"/>
</dbReference>
<dbReference type="RefSeq" id="WP_002857319.1">
    <property type="nucleotide sequence ID" value="NC_008787.1"/>
</dbReference>
<dbReference type="PDB" id="5OWV">
    <property type="method" value="X-ray"/>
    <property type="resolution" value="3.72 A"/>
    <property type="chains" value="A/B=1-728"/>
</dbReference>
<dbReference type="PDB" id="5OXF">
    <property type="method" value="X-ray"/>
    <property type="resolution" value="3.94 A"/>
    <property type="chains" value="A/B=1-728"/>
</dbReference>
<dbReference type="PDBsum" id="5OWV"/>
<dbReference type="PDBsum" id="5OXF"/>
<dbReference type="SMR" id="A0A0H3PJL7"/>
<dbReference type="KEGG" id="cjj:CJJ81176_0435"/>
<dbReference type="eggNOG" id="COG0699">
    <property type="taxonomic scope" value="Bacteria"/>
</dbReference>
<dbReference type="HOGENOM" id="CLU_019605_0_0_7"/>
<dbReference type="Proteomes" id="UP000000646">
    <property type="component" value="Chromosome"/>
</dbReference>
<dbReference type="GO" id="GO:0005829">
    <property type="term" value="C:cytosol"/>
    <property type="evidence" value="ECO:0007669"/>
    <property type="project" value="UniProtKB-SubCell"/>
</dbReference>
<dbReference type="GO" id="GO:0005525">
    <property type="term" value="F:GTP binding"/>
    <property type="evidence" value="ECO:0007669"/>
    <property type="project" value="UniProtKB-KW"/>
</dbReference>
<dbReference type="GO" id="GO:0016787">
    <property type="term" value="F:hydrolase activity"/>
    <property type="evidence" value="ECO:0007669"/>
    <property type="project" value="UniProtKB-KW"/>
</dbReference>
<dbReference type="CDD" id="cd09912">
    <property type="entry name" value="DLP_2"/>
    <property type="match status" value="1"/>
</dbReference>
<dbReference type="Gene3D" id="3.40.50.300">
    <property type="entry name" value="P-loop containing nucleotide triphosphate hydrolases"/>
    <property type="match status" value="1"/>
</dbReference>
<dbReference type="InterPro" id="IPR045063">
    <property type="entry name" value="Dynamin_N"/>
</dbReference>
<dbReference type="InterPro" id="IPR030381">
    <property type="entry name" value="G_DYNAMIN_dom"/>
</dbReference>
<dbReference type="InterPro" id="IPR027417">
    <property type="entry name" value="P-loop_NTPase"/>
</dbReference>
<dbReference type="InterPro" id="IPR051943">
    <property type="entry name" value="TRAFAC_Dynamin-like_GTPase"/>
</dbReference>
<dbReference type="PANTHER" id="PTHR43681:SF1">
    <property type="entry name" value="SARCALUMENIN"/>
    <property type="match status" value="1"/>
</dbReference>
<dbReference type="PANTHER" id="PTHR43681">
    <property type="entry name" value="TRANSMEMBRANE GTPASE FZO"/>
    <property type="match status" value="1"/>
</dbReference>
<dbReference type="Pfam" id="PF00350">
    <property type="entry name" value="Dynamin_N"/>
    <property type="match status" value="1"/>
</dbReference>
<dbReference type="SUPFAM" id="SSF52540">
    <property type="entry name" value="P-loop containing nucleoside triphosphate hydrolases"/>
    <property type="match status" value="1"/>
</dbReference>
<dbReference type="PROSITE" id="PS51718">
    <property type="entry name" value="G_DYNAMIN_2"/>
    <property type="match status" value="1"/>
</dbReference>
<comment type="function">
    <text evidence="2">The heterotetrameric DLP1(2)-DLP2(2) complex tethers liposomes and may mediate their fusion. Initial binding is probably mediated by DLP1, while DLP2 couples DLP1 subunits and increases the effective reach of the complex up to 45 nm. The role of the nucleotide is unknown. This subunit alone weakly binds to liposomes; GTP, GDP, GMPPCP and GMPPNP do not change heterotetramer binding. Tetramerization is required for GTPase activity, suggesting the GTPase domains (dynamin-type G) from DLP1 and DLP2 must dimerize to reconstitute the GTPase active site.</text>
</comment>
<comment type="catalytic activity">
    <reaction evidence="2">
        <text>GTP + H2O = GDP + phosphate + H(+)</text>
        <dbReference type="Rhea" id="RHEA:19669"/>
        <dbReference type="ChEBI" id="CHEBI:15377"/>
        <dbReference type="ChEBI" id="CHEBI:15378"/>
        <dbReference type="ChEBI" id="CHEBI:37565"/>
        <dbReference type="ChEBI" id="CHEBI:43474"/>
        <dbReference type="ChEBI" id="CHEBI:58189"/>
    </reaction>
</comment>
<comment type="subunit">
    <text evidence="2">Forms a 2:2 heterotetramer with DLP1. DLP2 forms a central back-to-back dimer flanked on each side by a DLP1 subunit. In the crystal structures the 2 DLP1 subunits are in very different conformations.</text>
</comment>
<comment type="subcellular location">
    <subcellularLocation>
        <location evidence="2">Cytoplasm</location>
        <location evidence="2">Cytosol</location>
    </subcellularLocation>
</comment>
<comment type="domain">
    <text evidence="2">Protein is very flexible, is probably able to bind membranes in many conformations. The N-terminus of DLP2 inserts into the assembly domain of DLP1; this is followed by a 9 residue DLP2 linker which allows DLP1 significant movement. The linker is long enough to allow the GTPase domains (dynamin-type G) of DLP1 and DLP2 to heterodimerize.</text>
</comment>
<comment type="disruption phenotype">
    <text evidence="2">Double dlp1-dlp2 deletions have no obvious cell division defects, have no flagella (possibly due to loss of expression of flgP) and are non-motile.</text>
</comment>
<comment type="similarity">
    <text evidence="1">Belongs to the TRAFAC class dynamin-like GTPase superfamily. Dynamin/Fzo/YdjA family.</text>
</comment>
<accession>A0A0H3PJL7</accession>
<keyword id="KW-0002">3D-structure</keyword>
<keyword id="KW-0963">Cytoplasm</keyword>
<keyword id="KW-0342">GTP-binding</keyword>
<keyword id="KW-0378">Hydrolase</keyword>
<keyword id="KW-0547">Nucleotide-binding</keyword>
<sequence length="728" mass="84585">MKELFQKIWQNELQFLNFDAKFQDKSKLDTAECAIILSVNKDNYERYFLLKEFQELCKKIDLRVDIFSMQNAQICILNLFKSGFISKQDLLKALKILEKISKNTEIFDFILQEKVQSIDQKALFQNDFKELNTINLELQKLSFDENLKSRLQKTLEKFQNLEFNIAITGVMNAGKSSLLNALLKEDFLGVSNIPETANLTVLSYGKSEEAKIYFWDKKEWQNILESSHFNADLKEFIDKLDKSVNIEDFIKDKPLIQNIALCELKNFSSAKNKISALIKKIEIKSHLEFLKNNISIVDTPGLDDVVVQREIVTNEYLRESDFLIHLMNASQSLTQKDADFLVHCLLNSRLSKFLIVLTKADLLSKKDLEEVIVYTKESLKSRLVDLDENLVEKIDFLCVSAKMASDFYKGLASKESLQKSGMQEFENYLFNELYAGEKSKIALRAYKKELHLELKNILSEYEMQNRLIKENKQGVSEENQKLLLELQKQNTLLKEAQDEISNSIAKLKNIDSGIDNLVLLLAKKLKERLIDEFKYLKNNAQKLNLSRILNIVDITTKDGINDILREIKFENIKKIEELKTNLSLKYDFLKDDFDNGFEGFKDGISKNIDSIFQSEKFALLRLKIEKLSNLKSDLYELETNLDTVIFDTFKEFKMSEILNSLNINGAFFEFLNDKLKHYEKNQKSKLESLEKVLQSLKNQDANILNSFEENLEKIEKLKQLEMGLLNAD</sequence>
<name>DLP1_CAMJJ</name>
<feature type="chain" id="PRO_0000453205" description="Dynamin-like protein 1">
    <location>
        <begin position="1"/>
        <end position="728"/>
    </location>
</feature>
<feature type="domain" description="Dynamin-type G" evidence="1">
    <location>
        <begin position="159"/>
        <end position="442"/>
    </location>
</feature>
<feature type="region of interest" description="Assembly domain, required for tetramerization" evidence="2">
    <location>
        <begin position="1"/>
        <end position="119"/>
    </location>
</feature>
<feature type="region of interest" description="G1 motif" evidence="1">
    <location>
        <begin position="169"/>
        <end position="176"/>
    </location>
</feature>
<feature type="region of interest" description="G2 motif" evidence="1">
    <location>
        <begin position="195"/>
        <end position="196"/>
    </location>
</feature>
<feature type="region of interest" description="G3 motif" evidence="1">
    <location>
        <begin position="298"/>
        <end position="301"/>
    </location>
</feature>
<feature type="region of interest" description="G4 motif" evidence="1">
    <location>
        <begin position="358"/>
        <end position="361"/>
    </location>
</feature>
<feature type="region of interest" description="G5 motif" evidence="1">
    <location>
        <position position="388"/>
    </location>
</feature>
<feature type="region of interest" description="Required for liposome binding but not for tetramerization" evidence="2">
    <location>
        <begin position="470"/>
        <end position="695"/>
    </location>
</feature>
<feature type="binding site" evidence="2 5">
    <location>
        <begin position="171"/>
        <end position="177"/>
    </location>
    <ligand>
        <name>GDP</name>
        <dbReference type="ChEBI" id="CHEBI:58189"/>
    </ligand>
</feature>
<feature type="binding site" evidence="2 5">
    <location>
        <position position="359"/>
    </location>
    <ligand>
        <name>GDP</name>
        <dbReference type="ChEBI" id="CHEBI:58189"/>
    </ligand>
</feature>
<feature type="binding site" evidence="2 5">
    <location>
        <begin position="400"/>
        <end position="402"/>
    </location>
    <ligand>
        <name>GDP</name>
        <dbReference type="ChEBI" id="CHEBI:58189"/>
    </ligand>
</feature>
<feature type="mutagenesis site" description="No GTPase activity." evidence="2">
    <original>K</original>
    <variation>A</variation>
    <location>
        <position position="175"/>
    </location>
</feature>
<organism>
    <name type="scientific">Campylobacter jejuni subsp. jejuni serotype O:23/36 (strain 81-176)</name>
    <dbReference type="NCBI Taxonomy" id="354242"/>
    <lineage>
        <taxon>Bacteria</taxon>
        <taxon>Pseudomonadati</taxon>
        <taxon>Campylobacterota</taxon>
        <taxon>Epsilonproteobacteria</taxon>
        <taxon>Campylobacterales</taxon>
        <taxon>Campylobacteraceae</taxon>
        <taxon>Campylobacter</taxon>
    </lineage>
</organism>
<protein>
    <recommendedName>
        <fullName evidence="3">Dynamin-like protein 1</fullName>
        <shortName evidence="3">DLP1</shortName>
    </recommendedName>
</protein>
<evidence type="ECO:0000255" key="1">
    <source>
        <dbReference type="PROSITE-ProRule" id="PRU01055"/>
    </source>
</evidence>
<evidence type="ECO:0000269" key="2">
    <source>
    </source>
</evidence>
<evidence type="ECO:0000303" key="3">
    <source>
    </source>
</evidence>
<evidence type="ECO:0007744" key="4">
    <source>
        <dbReference type="PDB" id="5OWV"/>
    </source>
</evidence>
<evidence type="ECO:0007744" key="5">
    <source>
        <dbReference type="PDB" id="5OXF"/>
    </source>
</evidence>
<proteinExistence type="evidence at protein level"/>
<reference key="1">
    <citation type="submission" date="2006-12" db="EMBL/GenBank/DDBJ databases">
        <authorList>
            <person name="Fouts D.E."/>
            <person name="Nelson K.E."/>
            <person name="Sebastian Y."/>
        </authorList>
    </citation>
    <scope>NUCLEOTIDE SEQUENCE [LARGE SCALE GENOMIC DNA]</scope>
    <source>
        <strain>81-176</strain>
    </source>
</reference>
<reference evidence="4 5" key="2">
    <citation type="journal article" date="2018" name="Nat. Commun.">
        <title>Structural basis for membrane tethering by a bacterial dynamin-like pair.</title>
        <authorList>
            <person name="Liu J."/>
            <person name="Noel J.K."/>
            <person name="Low H.H."/>
        </authorList>
    </citation>
    <scope>X-RAY CRYSTALLOGRAPHY (3.72 ANGSTROMS) WITH AND WITHOUT GDP</scope>
    <scope>CATALYTIC ACTIVITY</scope>
    <scope>SUBUNIT</scope>
    <scope>SUBCELLULAR LOCATION</scope>
    <scope>DOMAIN</scope>
    <scope>DISRUPTION PHENOTYPE</scope>
    <scope>MUTAGENESIS OF LYS-175</scope>
    <source>
        <strain>81-176</strain>
    </source>
</reference>